<keyword id="KW-0007">Acetylation</keyword>
<keyword id="KW-1003">Cell membrane</keyword>
<keyword id="KW-0963">Cytoplasm</keyword>
<keyword id="KW-1017">Isopeptide bond</keyword>
<keyword id="KW-0472">Membrane</keyword>
<keyword id="KW-0539">Nucleus</keyword>
<keyword id="KW-0597">Phosphoprotein</keyword>
<keyword id="KW-1185">Reference proteome</keyword>
<keyword id="KW-0832">Ubl conjugation</keyword>
<keyword id="KW-0833">Ubl conjugation pathway</keyword>
<proteinExistence type="inferred from homology"/>
<evidence type="ECO:0000250" key="1"/>
<evidence type="ECO:0000250" key="2">
    <source>
        <dbReference type="UniProtKB" id="P63165"/>
    </source>
</evidence>
<evidence type="ECO:0000250" key="3">
    <source>
        <dbReference type="UniProtKB" id="P63166"/>
    </source>
</evidence>
<evidence type="ECO:0000255" key="4">
    <source>
        <dbReference type="PROSITE-ProRule" id="PRU00214"/>
    </source>
</evidence>
<evidence type="ECO:0000269" key="5">
    <source>
    </source>
</evidence>
<evidence type="ECO:0000305" key="6"/>
<organism>
    <name type="scientific">Ictidomys tridecemlineatus</name>
    <name type="common">Thirteen-lined ground squirrel</name>
    <name type="synonym">Spermophilus tridecemlineatus</name>
    <dbReference type="NCBI Taxonomy" id="43179"/>
    <lineage>
        <taxon>Eukaryota</taxon>
        <taxon>Metazoa</taxon>
        <taxon>Chordata</taxon>
        <taxon>Craniata</taxon>
        <taxon>Vertebrata</taxon>
        <taxon>Euteleostomi</taxon>
        <taxon>Mammalia</taxon>
        <taxon>Eutheria</taxon>
        <taxon>Euarchontoglires</taxon>
        <taxon>Glires</taxon>
        <taxon>Rodentia</taxon>
        <taxon>Sciuromorpha</taxon>
        <taxon>Sciuridae</taxon>
        <taxon>Xerinae</taxon>
        <taxon>Marmotini</taxon>
        <taxon>Ictidomys</taxon>
    </lineage>
</organism>
<feature type="initiator methionine" description="Removed" evidence="2">
    <location>
        <position position="1"/>
    </location>
</feature>
<feature type="chain" id="PRO_0000250517" description="Small ubiquitin-related modifier 1">
    <location>
        <begin position="2"/>
        <end position="97"/>
    </location>
</feature>
<feature type="propeptide" id="PRO_0000250518" evidence="1">
    <location>
        <begin position="98"/>
        <end position="101"/>
    </location>
</feature>
<feature type="domain" description="Ubiquitin-like" evidence="4">
    <location>
        <begin position="20"/>
        <end position="97"/>
    </location>
</feature>
<feature type="site" description="Interaction with PIAS2" evidence="1">
    <location>
        <position position="36"/>
    </location>
</feature>
<feature type="modified residue" description="N-acetylserine" evidence="2">
    <location>
        <position position="2"/>
    </location>
</feature>
<feature type="modified residue" description="Phosphoserine" evidence="2">
    <location>
        <position position="2"/>
    </location>
</feature>
<feature type="modified residue" description="Phosphoserine" evidence="2">
    <location>
        <position position="9"/>
    </location>
</feature>
<feature type="modified residue" description="Phosphoserine" evidence="2">
    <location>
        <position position="32"/>
    </location>
</feature>
<feature type="cross-link" description="Glycyl lysine isopeptide (Lys-Gly) (interchain with G-Cter in SUMO1); alternate" evidence="2">
    <location>
        <position position="7"/>
    </location>
</feature>
<feature type="cross-link" description="Glycyl lysine isopeptide (Lys-Gly) (interchain with G-Cter in SUMO2); alternate" evidence="2">
    <location>
        <position position="7"/>
    </location>
</feature>
<feature type="cross-link" description="Glycyl lysine isopeptide (Lys-Gly) (interchain with G-Cter in SUMO2)" evidence="2">
    <location>
        <position position="16"/>
    </location>
</feature>
<feature type="cross-link" description="Glycyl lysine isopeptide (Lys-Gly) (interchain with G-Cter in SUMO2)" evidence="2">
    <location>
        <position position="17"/>
    </location>
</feature>
<feature type="cross-link" description="Glycyl lysine isopeptide (Lys-Gly) (interchain with G-Cter in SUMO2)" evidence="2">
    <location>
        <position position="23"/>
    </location>
</feature>
<feature type="cross-link" description="Glycyl lysine isopeptide (Lys-Gly) (interchain with G-Cter in SUMO1)" evidence="2">
    <location>
        <position position="25"/>
    </location>
</feature>
<feature type="cross-link" description="Glycyl lysine isopeptide (Lys-Gly) (interchain with G-Cter in SUMO2)" evidence="2">
    <location>
        <position position="37"/>
    </location>
</feature>
<feature type="cross-link" description="Glycyl lysine isopeptide (Lys-Gly) (interchain with G-Cter in SUMO2)" evidence="2">
    <location>
        <position position="39"/>
    </location>
</feature>
<feature type="cross-link" description="Glycyl lysine isopeptide (Lys-Gly) (interchain with G-Cter in SUMO2)" evidence="2">
    <location>
        <position position="45"/>
    </location>
</feature>
<feature type="cross-link" description="Glycyl lysine isopeptide (Lys-Gly) (interchain with G-Cter in SUMO2)" evidence="2">
    <location>
        <position position="46"/>
    </location>
</feature>
<feature type="cross-link" description="Glycyl lysine isopeptide (Gly-Lys) (interchain with K-? in acceptor proteins)" evidence="4">
    <location>
        <position position="97"/>
    </location>
</feature>
<sequence length="101" mass="11570">MSDQEAKPSTEDLGDKKEGEYIKLKVIGQDSSEIHFKVKMTTHLKKLKESYCQRQGVPMNSLRFLFEGQRIADNHTPKELGMEEEDVIEVYQEQTGGHSNV</sequence>
<gene>
    <name type="primary">SUMO1</name>
</gene>
<reference key="1">
    <citation type="journal article" date="2007" name="J. Cereb. Blood Flow Metab.">
        <title>Protein SUMOylation is massively increased in hibernation torpor and is critical for the cytoprotection provided by ischemic preconditioning and hypothermia in SHSY5Y cells.</title>
        <authorList>
            <person name="Lee Y.J."/>
            <person name="Miyake S."/>
            <person name="Wakita H."/>
            <person name="McMullen D.C."/>
            <person name="Azuma Y."/>
            <person name="Auh S."/>
            <person name="Hallenbeck J.M."/>
        </authorList>
    </citation>
    <scope>NUCLEOTIDE SEQUENCE [MRNA]</scope>
    <scope>SUBCELLULAR LOCATION</scope>
    <scope>FUNCTION</scope>
</reference>
<protein>
    <recommendedName>
        <fullName>Small ubiquitin-related modifier 1</fullName>
        <shortName>SUMO-1</shortName>
    </recommendedName>
</protein>
<name>SUMO1_ICTTR</name>
<dbReference type="EMBL" id="DQ385870">
    <property type="protein sequence ID" value="ABD39322.1"/>
    <property type="molecule type" value="mRNA"/>
</dbReference>
<dbReference type="RefSeq" id="NP_001269187.1">
    <property type="nucleotide sequence ID" value="NM_001282258.1"/>
</dbReference>
<dbReference type="BMRB" id="Q2EF74"/>
<dbReference type="SMR" id="Q2EF74"/>
<dbReference type="STRING" id="43179.ENSSTOP00000031441"/>
<dbReference type="GeneID" id="101961876"/>
<dbReference type="KEGG" id="iti:101961876"/>
<dbReference type="CTD" id="7341"/>
<dbReference type="eggNOG" id="KOG1769">
    <property type="taxonomic scope" value="Eukaryota"/>
</dbReference>
<dbReference type="InParanoid" id="Q2EF74"/>
<dbReference type="OrthoDB" id="442921at2759"/>
<dbReference type="Proteomes" id="UP000005215">
    <property type="component" value="Unassembled WGS sequence"/>
</dbReference>
<dbReference type="GO" id="GO:0005737">
    <property type="term" value="C:cytoplasm"/>
    <property type="evidence" value="ECO:0007669"/>
    <property type="project" value="UniProtKB-SubCell"/>
</dbReference>
<dbReference type="GO" id="GO:0031965">
    <property type="term" value="C:nuclear membrane"/>
    <property type="evidence" value="ECO:0007669"/>
    <property type="project" value="UniProtKB-SubCell"/>
</dbReference>
<dbReference type="GO" id="GO:0016607">
    <property type="term" value="C:nuclear speck"/>
    <property type="evidence" value="ECO:0007669"/>
    <property type="project" value="UniProtKB-SubCell"/>
</dbReference>
<dbReference type="GO" id="GO:0097165">
    <property type="term" value="C:nuclear stress granule"/>
    <property type="evidence" value="ECO:0000250"/>
    <property type="project" value="UniProtKB"/>
</dbReference>
<dbReference type="GO" id="GO:0005886">
    <property type="term" value="C:plasma membrane"/>
    <property type="evidence" value="ECO:0000250"/>
    <property type="project" value="UniProtKB"/>
</dbReference>
<dbReference type="GO" id="GO:0016605">
    <property type="term" value="C:PML body"/>
    <property type="evidence" value="ECO:0000250"/>
    <property type="project" value="UniProtKB"/>
</dbReference>
<dbReference type="GO" id="GO:0015459">
    <property type="term" value="F:potassium channel regulator activity"/>
    <property type="evidence" value="ECO:0000250"/>
    <property type="project" value="UniProtKB"/>
</dbReference>
<dbReference type="GO" id="GO:0008134">
    <property type="term" value="F:transcription factor binding"/>
    <property type="evidence" value="ECO:0000250"/>
    <property type="project" value="AgBase"/>
</dbReference>
<dbReference type="GO" id="GO:0031625">
    <property type="term" value="F:ubiquitin protein ligase binding"/>
    <property type="evidence" value="ECO:0000250"/>
    <property type="project" value="UniProtKB"/>
</dbReference>
<dbReference type="GO" id="GO:0071276">
    <property type="term" value="P:cellular response to cadmium ion"/>
    <property type="evidence" value="ECO:0000250"/>
    <property type="project" value="UniProtKB"/>
</dbReference>
<dbReference type="GO" id="GO:0034605">
    <property type="term" value="P:cellular response to heat"/>
    <property type="evidence" value="ECO:0000250"/>
    <property type="project" value="UniProtKB"/>
</dbReference>
<dbReference type="GO" id="GO:0045759">
    <property type="term" value="P:negative regulation of action potential"/>
    <property type="evidence" value="ECO:0000250"/>
    <property type="project" value="UniProtKB"/>
</dbReference>
<dbReference type="GO" id="GO:1902260">
    <property type="term" value="P:negative regulation of delayed rectifier potassium channel activity"/>
    <property type="evidence" value="ECO:0000250"/>
    <property type="project" value="UniProtKB"/>
</dbReference>
<dbReference type="GO" id="GO:0016925">
    <property type="term" value="P:protein sumoylation"/>
    <property type="evidence" value="ECO:0000250"/>
    <property type="project" value="UniProtKB"/>
</dbReference>
<dbReference type="GO" id="GO:0060021">
    <property type="term" value="P:roof of mouth development"/>
    <property type="evidence" value="ECO:0000250"/>
    <property type="project" value="UniProtKB"/>
</dbReference>
<dbReference type="CDD" id="cd16114">
    <property type="entry name" value="Ubl_SUMO1"/>
    <property type="match status" value="1"/>
</dbReference>
<dbReference type="FunFam" id="3.10.20.90:FF:000092">
    <property type="entry name" value="Small ubiquitin-related modifier"/>
    <property type="match status" value="1"/>
</dbReference>
<dbReference type="Gene3D" id="3.10.20.90">
    <property type="entry name" value="Phosphatidylinositol 3-kinase Catalytic Subunit, Chain A, domain 1"/>
    <property type="match status" value="1"/>
</dbReference>
<dbReference type="InterPro" id="IPR022617">
    <property type="entry name" value="Rad60/SUMO-like_dom"/>
</dbReference>
<dbReference type="InterPro" id="IPR046332">
    <property type="entry name" value="SUMO1_Ubl"/>
</dbReference>
<dbReference type="InterPro" id="IPR000626">
    <property type="entry name" value="Ubiquitin-like_dom"/>
</dbReference>
<dbReference type="InterPro" id="IPR029071">
    <property type="entry name" value="Ubiquitin-like_domsf"/>
</dbReference>
<dbReference type="PANTHER" id="PTHR10562">
    <property type="entry name" value="SMALL UBIQUITIN-RELATED MODIFIER"/>
    <property type="match status" value="1"/>
</dbReference>
<dbReference type="Pfam" id="PF11976">
    <property type="entry name" value="Rad60-SLD"/>
    <property type="match status" value="1"/>
</dbReference>
<dbReference type="SMART" id="SM00213">
    <property type="entry name" value="UBQ"/>
    <property type="match status" value="1"/>
</dbReference>
<dbReference type="SUPFAM" id="SSF54236">
    <property type="entry name" value="Ubiquitin-like"/>
    <property type="match status" value="1"/>
</dbReference>
<dbReference type="PROSITE" id="PS50053">
    <property type="entry name" value="UBIQUITIN_2"/>
    <property type="match status" value="1"/>
</dbReference>
<accession>Q2EF74</accession>
<comment type="function">
    <text evidence="2 3 5">Ubiquitin-like protein that can be covalently attached to proteins as a monomer or a lysine-linked polymer. Covalent attachment via an isopeptide bond to its substrates requires prior activation by the E1 complex SAE1-SAE2 and linkage to the E2 enzyme UBE2I, and can be promoted by E3 ligases such as PIAS1-4, RANBP2 or CBX4. This post-translational modification on lysine residues of proteins plays a crucial role in a number of cellular processes such as nuclear transport, DNA replication and repair, mitosis and signal transduction. Involved for instance in targeting RANGAP1 to the nuclear pore complex protein RANBP2. Covalently attached to the voltage-gated potassium channel KCNB1; this modulates the gating characteristics of KCNB1. Polymeric SUMO1 chains are also susceptible to polyubiquitination which functions as a signal for proteasomal degradation of modified proteins (By similarity). May be involved in modified proteins. May also regulate a network of genes involved in palate development. Covalently attached to ZFHX3.</text>
</comment>
<comment type="subunit">
    <text evidence="2 3">Covalently attached to KCNB1; UBE2I increases cross-linking with KCNB1 and PIAS1 decreases cross-links with KCNB1 (By similarity). Interacts with SAE2, RANBP2, PIAS1 and PIAS2 (By similarity). Interacts with PRKN (By similarity). Covalently attached to a number of proteins such as IKFZ1, PML, RANGAP1, HIPK2, SP100, p53, p73-alpha, MDM2, JUN, DNMT3B and TDG (By similarity). Also interacts with HIF1A, HIPK2, HIPK3, CHD3, EXOSC9, RAD51 and RAD52 (By similarity). Interacts with USP25 (via ts SIM domain); the interaction weakly sumoylates USP25 (By similarity). Interacts with SIMC1, CASP8AP2, RNF111 and SOBP (via SIM domains) (By similarity). Interacts with BHLHE40/DEC1 (By similarity). Interacts with RWDD3 (By similarity). Interacts with UBE2I/UBC9 and this interaction is enhanced in the presence of RWDD3 (By similarity). Interacts with MTA1 (By similarity). Interacts with SENP2 (By similarity). Interacts with HINT1 (By similarity).</text>
</comment>
<comment type="subcellular location">
    <subcellularLocation>
        <location evidence="2">Nucleus membrane</location>
    </subcellularLocation>
    <subcellularLocation>
        <location evidence="3">Nucleus speckle</location>
    </subcellularLocation>
    <subcellularLocation>
        <location evidence="5">Cytoplasm</location>
    </subcellularLocation>
    <subcellularLocation>
        <location evidence="2">Nucleus</location>
        <location evidence="2">PML body</location>
    </subcellularLocation>
    <subcellularLocation>
        <location evidence="2">Cell membrane</location>
    </subcellularLocation>
    <subcellularLocation>
        <location evidence="5">Nucleus</location>
    </subcellularLocation>
    <subcellularLocation>
        <location evidence="2">Nucleus</location>
    </subcellularLocation>
    <text evidence="2 3">Recruited by BCL11A into the nuclear body (By similarity). In the presence of ZFHX3, sequesterd to nuclear body (NB)-like dots in the nucleus some of which overlap or closely associate with PML body (By similarity).</text>
</comment>
<comment type="PTM">
    <text evidence="2">Cleavage of precursor form by SENP1 or SENP2 is necessary for function.</text>
</comment>
<comment type="PTM">
    <text evidence="2">Polymeric SUMO1 chains undergo polyubiquitination by RNF4.</text>
</comment>
<comment type="miscellaneous">
    <text>Massive conjugation to proteins occurs in brain, kidney and liver during hibernation torpor.</text>
</comment>
<comment type="similarity">
    <text evidence="6">Belongs to the ubiquitin family. SUMO subfamily.</text>
</comment>